<organism>
    <name type="scientific">Friend spleen focus-forming virus (isolate 502)</name>
    <name type="common">FSFFV</name>
    <dbReference type="NCBI Taxonomy" id="355329"/>
    <lineage>
        <taxon>Viruses</taxon>
        <taxon>Riboviria</taxon>
        <taxon>Pararnavirae</taxon>
        <taxon>Artverviricota</taxon>
        <taxon>Revtraviricetes</taxon>
        <taxon>Ortervirales</taxon>
        <taxon>Retroviridae</taxon>
        <taxon>Orthoretrovirinae</taxon>
        <taxon>Gammaretrovirus</taxon>
        <taxon>Spleen focus-forming virus</taxon>
    </lineage>
</organism>
<gene>
    <name type="primary">gag</name>
</gene>
<keyword id="KW-1032">Host cell membrane</keyword>
<keyword id="KW-1043">Host membrane</keyword>
<keyword id="KW-0945">Host-virus interaction</keyword>
<keyword id="KW-0449">Lipoprotein</keyword>
<keyword id="KW-0472">Membrane</keyword>
<keyword id="KW-0519">Myristate</keyword>
<keyword id="KW-0694">RNA-binding</keyword>
<keyword id="KW-1198">Viral budding</keyword>
<keyword id="KW-1187">Viral budding via the host ESCRT complexes</keyword>
<keyword id="KW-0468">Viral matrix protein</keyword>
<keyword id="KW-1188">Viral release from host cell</keyword>
<keyword id="KW-0946">Virion</keyword>
<evidence type="ECO:0000250" key="1"/>
<evidence type="ECO:0000255" key="2"/>
<evidence type="ECO:0000256" key="3">
    <source>
        <dbReference type="SAM" id="MobiDB-lite"/>
    </source>
</evidence>
<evidence type="ECO:0000305" key="4"/>
<protein>
    <recommendedName>
        <fullName>Gag polyprotein</fullName>
    </recommendedName>
    <alternativeName>
        <fullName>Core polyprotein</fullName>
    </alternativeName>
    <component>
        <recommendedName>
            <fullName>Matrix protein p15</fullName>
            <shortName>MA</shortName>
        </recommendedName>
    </component>
    <component>
        <recommendedName>
            <fullName>RNA-binding phosphoprotein p12</fullName>
        </recommendedName>
        <alternativeName>
            <fullName>pp12</fullName>
        </alternativeName>
    </component>
</protein>
<proteinExistence type="inferred from homology"/>
<feature type="initiator methionine" description="Removed; by host" evidence="1">
    <location>
        <position position="1"/>
    </location>
</feature>
<feature type="chain" id="PRO_0000390799" description="Gag polyprotein">
    <location>
        <begin position="2"/>
        <end position="187"/>
    </location>
</feature>
<feature type="chain" id="PRO_0000040841" description="Matrix protein p15" evidence="2">
    <location>
        <begin position="2"/>
        <end position="129"/>
    </location>
</feature>
<feature type="chain" id="PRO_0000040842" description="RNA-binding phosphoprotein p12" evidence="2">
    <location>
        <begin position="130"/>
        <end position="187"/>
    </location>
</feature>
<feature type="region of interest" description="Disordered" evidence="3">
    <location>
        <begin position="107"/>
        <end position="187"/>
    </location>
</feature>
<feature type="short sequence motif" description="PTAP/PSAP motif">
    <location>
        <begin position="109"/>
        <end position="112"/>
    </location>
</feature>
<feature type="short sequence motif" description="LYPX(n)L motif">
    <location>
        <begin position="128"/>
        <end position="132"/>
    </location>
</feature>
<feature type="compositionally biased region" description="Basic and acidic residues" evidence="3">
    <location>
        <begin position="157"/>
        <end position="176"/>
    </location>
</feature>
<feature type="site" description="Cleavage; by viral protease" evidence="1">
    <location>
        <begin position="129"/>
        <end position="130"/>
    </location>
</feature>
<feature type="lipid moiety-binding region" description="N-myristoyl glycine; by host" evidence="1">
    <location>
        <position position="2"/>
    </location>
</feature>
<reference key="1">
    <citation type="journal article" date="1983" name="Proc. Natl. Acad. Sci. U.S.A.">
        <title>Complete nucleotide sequence of an infectious clone of Friend spleen focus-forming provirus: gp55 is an envelope fusion glycoprotein.</title>
        <authorList>
            <person name="Clark S.P."/>
            <person name="Mak T.W."/>
        </authorList>
    </citation>
    <scope>NUCLEOTIDE SEQUENCE [GENOMIC RNA]</scope>
</reference>
<organismHost>
    <name type="scientific">Mus musculus</name>
    <name type="common">Mouse</name>
    <dbReference type="NCBI Taxonomy" id="10090"/>
</organismHost>
<comment type="function">
    <text evidence="1">Gag polyprotein plays a role in budding and is processed by the viral protease during virion maturation outside the cell. During budding, it recruits, in a PPXY-dependent or independent manner, Nedd4-like ubiquitin ligases that conjugate ubiquitin molecules to Gag, or to Gag binding host factors. Interaction with HECT ubiquitin ligases probably link the viral protein to the host ESCRT pathway and facilitate release (By similarity).</text>
</comment>
<comment type="function">
    <text evidence="1">Matrix protein p15 targets Gag and gag-pol polyproteins to the plasma membrane via a multipartite membrane binding signal, that includes its myristoylated N-terminus. Also mediates nuclear localization of the preintegration complex (By similarity).</text>
</comment>
<comment type="subcellular location">
    <molecule>Gag polyprotein</molecule>
    <subcellularLocation>
        <location evidence="1">Virion</location>
    </subcellularLocation>
    <subcellularLocation>
        <location evidence="4">Host cell membrane</location>
        <topology evidence="4">Lipid-anchor</topology>
    </subcellularLocation>
</comment>
<comment type="subcellular location">
    <molecule>Matrix protein p15</molecule>
    <subcellularLocation>
        <location evidence="4">Virion</location>
    </subcellularLocation>
</comment>
<comment type="domain">
    <text evidence="1">Late-budding domains (L domains) are short sequence motifs essential for viral particle budding. They recruit proteins of the host ESCRT machinery (Endosomal Sorting Complex Required for Transport) or ESCRT-associated proteins. Matrix protein p15 contains one L domain: a PTAP/PSAP motif, which potentially interacts with the UEV domain of TSG101. The junction between the matrix protein p15 and RNA-binding phosphoprotein p12 contains one L domain: a LYPX(n)L motif which interacts with PDCD6IP (By similarity).</text>
</comment>
<comment type="PTM">
    <text evidence="1">Specific enzymatic cleavages by the viral protease yield mature proteins. The protease is released by autocatalytic cleavage. The polyprotein is cleaved during and after budding, this process is termed maturation (By similarity).</text>
</comment>
<comment type="caution">
    <text evidence="4">This gag polyprotein does not encode any capsid and nucleoprotein.</text>
</comment>
<sequence length="187" mass="20804">MGQTVTTPLSLTLEHWEDVQRTASNQSVDVKKRRWVTFCSAEWPTFGVGWPQDGTFNLDIILQVKSKVFSPGPHGHPDQVPYIVTWEAIAYEPPPWVKPFVSPKLSPSPTAPILPSGPSTQPPPRSALYPALTPSIKPGPSPIMADLSLTFSQKTLRRTEDRDRPPLTEMATEKRPPPLLRFLPPLP</sequence>
<dbReference type="EMBL" id="K00021">
    <property type="protein sequence ID" value="AAA46486.1"/>
    <property type="molecule type" value="Genomic_RNA"/>
</dbReference>
<dbReference type="PIR" id="A03929">
    <property type="entry name" value="FOVW5S"/>
</dbReference>
<dbReference type="RefSeq" id="NP_041217.1">
    <property type="nucleotide sequence ID" value="NC_001500.1"/>
</dbReference>
<dbReference type="SMR" id="P03331"/>
<dbReference type="ELM" id="P03331"/>
<dbReference type="KEGG" id="vg:1491887"/>
<dbReference type="Proteomes" id="UP000201688">
    <property type="component" value="Segment"/>
</dbReference>
<dbReference type="GO" id="GO:0020002">
    <property type="term" value="C:host cell plasma membrane"/>
    <property type="evidence" value="ECO:0007669"/>
    <property type="project" value="UniProtKB-SubCell"/>
</dbReference>
<dbReference type="GO" id="GO:0016020">
    <property type="term" value="C:membrane"/>
    <property type="evidence" value="ECO:0007669"/>
    <property type="project" value="UniProtKB-KW"/>
</dbReference>
<dbReference type="GO" id="GO:0044423">
    <property type="term" value="C:virion component"/>
    <property type="evidence" value="ECO:0007669"/>
    <property type="project" value="UniProtKB-KW"/>
</dbReference>
<dbReference type="GO" id="GO:0003723">
    <property type="term" value="F:RNA binding"/>
    <property type="evidence" value="ECO:0007669"/>
    <property type="project" value="UniProtKB-KW"/>
</dbReference>
<dbReference type="GO" id="GO:0039660">
    <property type="term" value="F:structural constituent of virion"/>
    <property type="evidence" value="ECO:0007669"/>
    <property type="project" value="UniProtKB-KW"/>
</dbReference>
<dbReference type="GO" id="GO:0039702">
    <property type="term" value="P:viral budding via host ESCRT complex"/>
    <property type="evidence" value="ECO:0007669"/>
    <property type="project" value="UniProtKB-KW"/>
</dbReference>
<dbReference type="Gene3D" id="1.10.150.180">
    <property type="entry name" value="Gamma-retroviral matrix domain"/>
    <property type="match status" value="1"/>
</dbReference>
<dbReference type="InterPro" id="IPR000840">
    <property type="entry name" value="G_retro_matrix"/>
</dbReference>
<dbReference type="InterPro" id="IPR036946">
    <property type="entry name" value="G_retro_matrix_sf"/>
</dbReference>
<dbReference type="InterPro" id="IPR050462">
    <property type="entry name" value="Retroviral_Gag-Pol_poly"/>
</dbReference>
<dbReference type="InterPro" id="IPR010999">
    <property type="entry name" value="Retrovr_matrix"/>
</dbReference>
<dbReference type="PANTHER" id="PTHR33166">
    <property type="entry name" value="GAG_P30 DOMAIN-CONTAINING PROTEIN"/>
    <property type="match status" value="1"/>
</dbReference>
<dbReference type="Pfam" id="PF01140">
    <property type="entry name" value="Gag_MA"/>
    <property type="match status" value="1"/>
</dbReference>
<dbReference type="SUPFAM" id="SSF47836">
    <property type="entry name" value="Retroviral matrix proteins"/>
    <property type="match status" value="1"/>
</dbReference>
<name>GAG_FRSF5</name>
<accession>P03331</accession>